<feature type="chain" id="PRO_0000278946" description="rRNA-processing protein cgrA">
    <location>
        <begin position="1"/>
        <end position="114"/>
    </location>
</feature>
<feature type="region of interest" description="Disordered" evidence="3">
    <location>
        <begin position="1"/>
        <end position="114"/>
    </location>
</feature>
<feature type="coiled-coil region" evidence="2">
    <location>
        <begin position="40"/>
        <end position="101"/>
    </location>
</feature>
<feature type="compositionally biased region" description="Polar residues" evidence="3">
    <location>
        <begin position="1"/>
        <end position="11"/>
    </location>
</feature>
<feature type="compositionally biased region" description="Basic and acidic residues" evidence="3">
    <location>
        <begin position="39"/>
        <end position="93"/>
    </location>
</feature>
<feature type="compositionally biased region" description="Basic residues" evidence="3">
    <location>
        <begin position="94"/>
        <end position="114"/>
    </location>
</feature>
<reference key="1">
    <citation type="journal article" date="2001" name="Med. Mycol.">
        <title>Molecular cloning of Aspergillus fumigatus CgrA, the ortholog of a conserved fungal nucleolar protein.</title>
        <authorList>
            <person name="Boettner D."/>
            <person name="Huebner N."/>
            <person name="Rhodes J.C."/>
            <person name="Askew D.S."/>
        </authorList>
    </citation>
    <scope>NUCLEOTIDE SEQUENCE [MRNA]</scope>
    <scope>FUNCTION</scope>
    <scope>SUBCELLULAR LOCATION</scope>
</reference>
<reference key="2">
    <citation type="journal article" date="2005" name="Nature">
        <title>Genomic sequence of the pathogenic and allergenic filamentous fungus Aspergillus fumigatus.</title>
        <authorList>
            <person name="Nierman W.C."/>
            <person name="Pain A."/>
            <person name="Anderson M.J."/>
            <person name="Wortman J.R."/>
            <person name="Kim H.S."/>
            <person name="Arroyo J."/>
            <person name="Berriman M."/>
            <person name="Abe K."/>
            <person name="Archer D.B."/>
            <person name="Bermejo C."/>
            <person name="Bennett J.W."/>
            <person name="Bowyer P."/>
            <person name="Chen D."/>
            <person name="Collins M."/>
            <person name="Coulsen R."/>
            <person name="Davies R."/>
            <person name="Dyer P.S."/>
            <person name="Farman M.L."/>
            <person name="Fedorova N."/>
            <person name="Fedorova N.D."/>
            <person name="Feldblyum T.V."/>
            <person name="Fischer R."/>
            <person name="Fosker N."/>
            <person name="Fraser A."/>
            <person name="Garcia J.L."/>
            <person name="Garcia M.J."/>
            <person name="Goble A."/>
            <person name="Goldman G.H."/>
            <person name="Gomi K."/>
            <person name="Griffith-Jones S."/>
            <person name="Gwilliam R."/>
            <person name="Haas B.J."/>
            <person name="Haas H."/>
            <person name="Harris D.E."/>
            <person name="Horiuchi H."/>
            <person name="Huang J."/>
            <person name="Humphray S."/>
            <person name="Jimenez J."/>
            <person name="Keller N."/>
            <person name="Khouri H."/>
            <person name="Kitamoto K."/>
            <person name="Kobayashi T."/>
            <person name="Konzack S."/>
            <person name="Kulkarni R."/>
            <person name="Kumagai T."/>
            <person name="Lafton A."/>
            <person name="Latge J.-P."/>
            <person name="Li W."/>
            <person name="Lord A."/>
            <person name="Lu C."/>
            <person name="Majoros W.H."/>
            <person name="May G.S."/>
            <person name="Miller B.L."/>
            <person name="Mohamoud Y."/>
            <person name="Molina M."/>
            <person name="Monod M."/>
            <person name="Mouyna I."/>
            <person name="Mulligan S."/>
            <person name="Murphy L.D."/>
            <person name="O'Neil S."/>
            <person name="Paulsen I."/>
            <person name="Penalva M.A."/>
            <person name="Pertea M."/>
            <person name="Price C."/>
            <person name="Pritchard B.L."/>
            <person name="Quail M.A."/>
            <person name="Rabbinowitsch E."/>
            <person name="Rawlins N."/>
            <person name="Rajandream M.A."/>
            <person name="Reichard U."/>
            <person name="Renauld H."/>
            <person name="Robson G.D."/>
            <person name="Rodriguez de Cordoba S."/>
            <person name="Rodriguez-Pena J.M."/>
            <person name="Ronning C.M."/>
            <person name="Rutter S."/>
            <person name="Salzberg S.L."/>
            <person name="Sanchez M."/>
            <person name="Sanchez-Ferrero J.C."/>
            <person name="Saunders D."/>
            <person name="Seeger K."/>
            <person name="Squares R."/>
            <person name="Squares S."/>
            <person name="Takeuchi M."/>
            <person name="Tekaia F."/>
            <person name="Turner G."/>
            <person name="Vazquez de Aldana C.R."/>
            <person name="Weidman J."/>
            <person name="White O."/>
            <person name="Woodward J.R."/>
            <person name="Yu J.-H."/>
            <person name="Fraser C.M."/>
            <person name="Galagan J.E."/>
            <person name="Asai K."/>
            <person name="Machida M."/>
            <person name="Hall N."/>
            <person name="Barrell B.G."/>
            <person name="Denning D.W."/>
        </authorList>
    </citation>
    <scope>NUCLEOTIDE SEQUENCE [LARGE SCALE GENOMIC DNA]</scope>
    <source>
        <strain>ATCC MYA-4609 / CBS 101355 / FGSC A1100 / Af293</strain>
    </source>
</reference>
<name>CGR1_ASPFU</name>
<comment type="function">
    <text evidence="1 4">Involved in nucleolar integrity and required for processing of the pre-rRNA for the 60S ribosome subunit.</text>
</comment>
<comment type="subcellular location">
    <subcellularLocation>
        <location evidence="4">Nucleus</location>
        <location evidence="4">Nucleolus</location>
    </subcellularLocation>
</comment>
<comment type="similarity">
    <text evidence="5">Belongs to the CGR1 family.</text>
</comment>
<evidence type="ECO:0000250" key="1"/>
<evidence type="ECO:0000255" key="2"/>
<evidence type="ECO:0000256" key="3">
    <source>
        <dbReference type="SAM" id="MobiDB-lite"/>
    </source>
</evidence>
<evidence type="ECO:0000269" key="4">
    <source>
    </source>
</evidence>
<evidence type="ECO:0000305" key="5"/>
<proteinExistence type="inferred from homology"/>
<keyword id="KW-0175">Coiled coil</keyword>
<keyword id="KW-0539">Nucleus</keyword>
<keyword id="KW-1185">Reference proteome</keyword>
<keyword id="KW-0690">Ribosome biogenesis</keyword>
<keyword id="KW-0698">rRNA processing</keyword>
<dbReference type="EMBL" id="AY008837">
    <property type="protein sequence ID" value="AAG28884.1"/>
    <property type="molecule type" value="mRNA"/>
</dbReference>
<dbReference type="EMBL" id="AAHF01000014">
    <property type="protein sequence ID" value="EAL84894.1"/>
    <property type="molecule type" value="Genomic_DNA"/>
</dbReference>
<dbReference type="RefSeq" id="XP_746932.1">
    <property type="nucleotide sequence ID" value="XM_741839.1"/>
</dbReference>
<dbReference type="SMR" id="Q9HEQ8"/>
<dbReference type="FunCoup" id="Q9HEQ8">
    <property type="interactions" value="112"/>
</dbReference>
<dbReference type="STRING" id="330879.Q9HEQ8"/>
<dbReference type="EnsemblFungi" id="EAL84894">
    <property type="protein sequence ID" value="EAL84894"/>
    <property type="gene ID" value="AFUA_8G02750"/>
</dbReference>
<dbReference type="GeneID" id="3504434"/>
<dbReference type="KEGG" id="afm:AFUA_8G02750"/>
<dbReference type="eggNOG" id="ENOG502S7VB">
    <property type="taxonomic scope" value="Eukaryota"/>
</dbReference>
<dbReference type="HOGENOM" id="CLU_125051_0_0_1"/>
<dbReference type="InParanoid" id="Q9HEQ8"/>
<dbReference type="OMA" id="NGKQWHD"/>
<dbReference type="OrthoDB" id="3942380at2759"/>
<dbReference type="PHI-base" id="PHI:335"/>
<dbReference type="Proteomes" id="UP000002530">
    <property type="component" value="Chromosome 8"/>
</dbReference>
<dbReference type="GO" id="GO:0005730">
    <property type="term" value="C:nucleolus"/>
    <property type="evidence" value="ECO:0007669"/>
    <property type="project" value="UniProtKB-SubCell"/>
</dbReference>
<dbReference type="GO" id="GO:0006364">
    <property type="term" value="P:rRNA processing"/>
    <property type="evidence" value="ECO:0007669"/>
    <property type="project" value="UniProtKB-KW"/>
</dbReference>
<dbReference type="InterPro" id="IPR005579">
    <property type="entry name" value="Cgr1-like"/>
</dbReference>
<dbReference type="Pfam" id="PF03879">
    <property type="entry name" value="Cgr1"/>
    <property type="match status" value="1"/>
</dbReference>
<accession>Q9HEQ8</accession>
<accession>Q4WBL8</accession>
<sequence length="114" mass="13779">MSSAIPTSSVNPVKGMRKNGKNWHDSKKPFRPTSGLTSYEKRLEARKRQEAVKEHERELREEKEAERKAQIQKIKDRRAAKEEKERYEKMAEKMHRKRVERLKRREKRNKLLHS</sequence>
<gene>
    <name type="primary">cgrA</name>
    <name type="synonym">cgr1</name>
    <name type="ORF">AFUA_8G02750</name>
</gene>
<organism>
    <name type="scientific">Aspergillus fumigatus (strain ATCC MYA-4609 / CBS 101355 / FGSC A1100 / Af293)</name>
    <name type="common">Neosartorya fumigata</name>
    <dbReference type="NCBI Taxonomy" id="330879"/>
    <lineage>
        <taxon>Eukaryota</taxon>
        <taxon>Fungi</taxon>
        <taxon>Dikarya</taxon>
        <taxon>Ascomycota</taxon>
        <taxon>Pezizomycotina</taxon>
        <taxon>Eurotiomycetes</taxon>
        <taxon>Eurotiomycetidae</taxon>
        <taxon>Eurotiales</taxon>
        <taxon>Aspergillaceae</taxon>
        <taxon>Aspergillus</taxon>
        <taxon>Aspergillus subgen. Fumigati</taxon>
    </lineage>
</organism>
<protein>
    <recommendedName>
        <fullName>rRNA-processing protein cgrA</fullName>
    </recommendedName>
</protein>